<evidence type="ECO:0000250" key="1">
    <source>
        <dbReference type="UniProtKB" id="Q9BTE7"/>
    </source>
</evidence>
<evidence type="ECO:0000250" key="2">
    <source>
        <dbReference type="UniProtKB" id="Q9CXV9"/>
    </source>
</evidence>
<evidence type="ECO:0000255" key="3">
    <source>
        <dbReference type="PROSITE-ProRule" id="PRU00574"/>
    </source>
</evidence>
<name>DCNL5_BOVIN</name>
<accession>Q1RMX9</accession>
<reference key="1">
    <citation type="submission" date="2006-04" db="EMBL/GenBank/DDBJ databases">
        <authorList>
            <consortium name="NIH - Mammalian Gene Collection (MGC) project"/>
        </authorList>
    </citation>
    <scope>NUCLEOTIDE SEQUENCE [LARGE SCALE MRNA]</scope>
    <source>
        <strain>Hereford</strain>
        <tissue>Uterus</tissue>
    </source>
</reference>
<sequence length="236" mass="27362">MPVKKKRKSGVAAAAAEDGGLKKCKISSYCRSQPPARLISGEEHFSSKKCLAWFYEYAGPDEVVGPEGMEKFCEDIGVEPENIIMLVLAWKLEAESMGFFTKEEWLKGMTSLQCDCTEKLQNKFDFLRSQLNDISSFKNIYRYAFDFARDKDQRSLDIDTAKSMLALLLGRTWPLFSVFYQYLEQSKYRVMNKDQWYNVLEFSRTVHADLSNYDEDGAWPVLLDEFVEWHKVRQAS</sequence>
<gene>
    <name type="primary">DCUN1D5</name>
</gene>
<dbReference type="EMBL" id="BC114644">
    <property type="protein sequence ID" value="AAI14645.1"/>
    <property type="molecule type" value="mRNA"/>
</dbReference>
<dbReference type="RefSeq" id="NP_001039477.1">
    <property type="nucleotide sequence ID" value="NM_001046012.1"/>
</dbReference>
<dbReference type="SMR" id="Q1RMX9"/>
<dbReference type="FunCoup" id="Q1RMX9">
    <property type="interactions" value="3080"/>
</dbReference>
<dbReference type="STRING" id="9913.ENSBTAP00000004020"/>
<dbReference type="PaxDb" id="9913-ENSBTAP00000004020"/>
<dbReference type="Ensembl" id="ENSBTAT00000004020.6">
    <property type="protein sequence ID" value="ENSBTAP00000004020.4"/>
    <property type="gene ID" value="ENSBTAG00000003087.6"/>
</dbReference>
<dbReference type="GeneID" id="508759"/>
<dbReference type="KEGG" id="bta:508759"/>
<dbReference type="CTD" id="84259"/>
<dbReference type="VEuPathDB" id="HostDB:ENSBTAG00000003087"/>
<dbReference type="VGNC" id="VGNC:27938">
    <property type="gene designation" value="DCUN1D5"/>
</dbReference>
<dbReference type="eggNOG" id="KOG3077">
    <property type="taxonomic scope" value="Eukaryota"/>
</dbReference>
<dbReference type="GeneTree" id="ENSGT00940000156155"/>
<dbReference type="HOGENOM" id="CLU_047042_3_1_1"/>
<dbReference type="InParanoid" id="Q1RMX9"/>
<dbReference type="OMA" id="HERKCKI"/>
<dbReference type="OrthoDB" id="286637at2759"/>
<dbReference type="TreeFam" id="TF354270"/>
<dbReference type="Reactome" id="R-BTA-8951664">
    <property type="pathway name" value="Neddylation"/>
</dbReference>
<dbReference type="Proteomes" id="UP000009136">
    <property type="component" value="Chromosome 15"/>
</dbReference>
<dbReference type="Bgee" id="ENSBTAG00000003087">
    <property type="expression patterns" value="Expressed in oocyte and 105 other cell types or tissues"/>
</dbReference>
<dbReference type="GO" id="GO:0005737">
    <property type="term" value="C:cytoplasm"/>
    <property type="evidence" value="ECO:0007669"/>
    <property type="project" value="UniProtKB-KW"/>
</dbReference>
<dbReference type="GO" id="GO:0005634">
    <property type="term" value="C:nucleus"/>
    <property type="evidence" value="ECO:0000314"/>
    <property type="project" value="UniProtKB"/>
</dbReference>
<dbReference type="GO" id="GO:0005819">
    <property type="term" value="C:spindle"/>
    <property type="evidence" value="ECO:0000250"/>
    <property type="project" value="UniProtKB"/>
</dbReference>
<dbReference type="GO" id="GO:0000151">
    <property type="term" value="C:ubiquitin ligase complex"/>
    <property type="evidence" value="ECO:0000318"/>
    <property type="project" value="GO_Central"/>
</dbReference>
<dbReference type="GO" id="GO:0097602">
    <property type="term" value="F:cullin family protein binding"/>
    <property type="evidence" value="ECO:0000250"/>
    <property type="project" value="UniProtKB"/>
</dbReference>
<dbReference type="GO" id="GO:0031624">
    <property type="term" value="F:ubiquitin conjugating enzyme binding"/>
    <property type="evidence" value="ECO:0000318"/>
    <property type="project" value="GO_Central"/>
</dbReference>
<dbReference type="GO" id="GO:0032182">
    <property type="term" value="F:ubiquitin-like protein binding"/>
    <property type="evidence" value="ECO:0000318"/>
    <property type="project" value="GO_Central"/>
</dbReference>
<dbReference type="GO" id="GO:0006974">
    <property type="term" value="P:DNA damage response"/>
    <property type="evidence" value="ECO:0000250"/>
    <property type="project" value="UniProtKB"/>
</dbReference>
<dbReference type="GO" id="GO:2000436">
    <property type="term" value="P:positive regulation of protein neddylation"/>
    <property type="evidence" value="ECO:0000250"/>
    <property type="project" value="UniProtKB"/>
</dbReference>
<dbReference type="GO" id="GO:0045116">
    <property type="term" value="P:protein neddylation"/>
    <property type="evidence" value="ECO:0000318"/>
    <property type="project" value="GO_Central"/>
</dbReference>
<dbReference type="GO" id="GO:0001558">
    <property type="term" value="P:regulation of cell growth"/>
    <property type="evidence" value="ECO:0000250"/>
    <property type="project" value="UniProtKB"/>
</dbReference>
<dbReference type="GO" id="GO:2000434">
    <property type="term" value="P:regulation of protein neddylation"/>
    <property type="evidence" value="ECO:0000250"/>
    <property type="project" value="UniProtKB"/>
</dbReference>
<dbReference type="FunFam" id="1.10.238.10:FF:000041">
    <property type="entry name" value="DCN1-like protein"/>
    <property type="match status" value="1"/>
</dbReference>
<dbReference type="FunFam" id="1.10.238.200:FF:000002">
    <property type="entry name" value="DCN1-like protein"/>
    <property type="match status" value="1"/>
</dbReference>
<dbReference type="Gene3D" id="1.10.238.200">
    <property type="entry name" value="Cullin, PONY binding domain"/>
    <property type="match status" value="1"/>
</dbReference>
<dbReference type="Gene3D" id="1.10.238.10">
    <property type="entry name" value="EF-hand"/>
    <property type="match status" value="1"/>
</dbReference>
<dbReference type="InterPro" id="IPR014764">
    <property type="entry name" value="DCN-prot"/>
</dbReference>
<dbReference type="InterPro" id="IPR042460">
    <property type="entry name" value="DCN1-like_PONY"/>
</dbReference>
<dbReference type="InterPro" id="IPR005176">
    <property type="entry name" value="PONY_dom"/>
</dbReference>
<dbReference type="PANTHER" id="PTHR12281:SF6">
    <property type="entry name" value="DCN1-LIKE PROTEIN 5"/>
    <property type="match status" value="1"/>
</dbReference>
<dbReference type="PANTHER" id="PTHR12281">
    <property type="entry name" value="RP42 RELATED"/>
    <property type="match status" value="1"/>
</dbReference>
<dbReference type="Pfam" id="PF03556">
    <property type="entry name" value="Cullin_binding"/>
    <property type="match status" value="1"/>
</dbReference>
<dbReference type="PROSITE" id="PS51229">
    <property type="entry name" value="DCUN1"/>
    <property type="match status" value="1"/>
</dbReference>
<keyword id="KW-0963">Cytoplasm</keyword>
<keyword id="KW-0206">Cytoskeleton</keyword>
<keyword id="KW-0539">Nucleus</keyword>
<keyword id="KW-0597">Phosphoprotein</keyword>
<keyword id="KW-1185">Reference proteome</keyword>
<comment type="function">
    <text evidence="1">Contributes to the neddylation of all cullins by transferring NEDD8 from N-terminally acetylated NEDD8-conjugating E2s enzyme to different cullin C-terminal domain-RBX complexes which is necessary for the activation of cullin-RING E3 ubiquitin ligases (CRLs). May play a role in DNA damage response and may participate in cell proliferation and anchorage-independent cell growth.</text>
</comment>
<comment type="subunit">
    <text evidence="1">Part of a complex that contains DCUN1D5, CUL1 and RBX1; this interaction is bridged by CUL1. Interacts (via the DCUN1 domain) with the unneddylated cullins: interacts with CUL1, CUL2, CUL3, CUL4A, CUL4B and CUL5; these interactions promote the cullin neddylation and the identity of the cullin dictates the affinity of the interaction. Interacts (via DCUN1 domain) with UBE2M (N-terminally acetylated form) and probably with UBE2F (N-terminally acetylated form). May also interact with regulators or subunits of cullin-RING ligases such as RBX1, RNF7, ELOB and DDB1; these interactions are bridged by cullins. Interacts with CAND1; this interaction is bridged by cullins and strongly inhibits the neddylation of cullins. These CAND-cullin-DCNL complexes can only be neddylated in the presence of a substrate adapter.</text>
</comment>
<comment type="subcellular location">
    <subcellularLocation>
        <location evidence="1">Nucleus</location>
    </subcellularLocation>
    <subcellularLocation>
        <location evidence="1">Cytoplasm</location>
        <location evidence="1">Cytoskeleton</location>
        <location evidence="1">Spindle</location>
    </subcellularLocation>
    <text evidence="1">Subcellular localization is independent of the interaction with cullins.</text>
</comment>
<comment type="domain">
    <text evidence="1">The DCUN1 domain, also known as PONY domain, mediates the interaction with different cullins. The DCUN1 domain mediates the interaction with the N-terminally acetylated NEDD8-conjugating E2s enzyme leading to the NEDD8 transfer from N-terminally acetylated NEDD8-conjugating E2s enzyme to different cullin C-terminal domain-RBX complexes; the neddylation efficiency correlates with the DCUN1D5-cullin and DCUN1D5-E2 interaction affinities.</text>
</comment>
<comment type="PTM">
    <text evidence="1 2">Phosphorylation at Ser-40 is independent of cullin's interaction. Phosphorylated in response to both TICAM1 and MYD88 dependent Toll-like receptor (TLR) pathway activation (By similarity). Phosphorylated in response to IL1B stimulation (By similarity).</text>
</comment>
<protein>
    <recommendedName>
        <fullName evidence="1">DCN1-like protein 5</fullName>
    </recommendedName>
    <alternativeName>
        <fullName>DCUN1 domain-containing protein 5</fullName>
    </alternativeName>
    <alternativeName>
        <fullName>Defective in cullin neddylation protein 1-like protein 5</fullName>
    </alternativeName>
    <alternativeName>
        <fullName evidence="1">Squamous cell carcinoma-related oncogene 5</fullName>
    </alternativeName>
</protein>
<organism>
    <name type="scientific">Bos taurus</name>
    <name type="common">Bovine</name>
    <dbReference type="NCBI Taxonomy" id="9913"/>
    <lineage>
        <taxon>Eukaryota</taxon>
        <taxon>Metazoa</taxon>
        <taxon>Chordata</taxon>
        <taxon>Craniata</taxon>
        <taxon>Vertebrata</taxon>
        <taxon>Euteleostomi</taxon>
        <taxon>Mammalia</taxon>
        <taxon>Eutheria</taxon>
        <taxon>Laurasiatheria</taxon>
        <taxon>Artiodactyla</taxon>
        <taxon>Ruminantia</taxon>
        <taxon>Pecora</taxon>
        <taxon>Bovidae</taxon>
        <taxon>Bovinae</taxon>
        <taxon>Bos</taxon>
    </lineage>
</organism>
<feature type="chain" id="PRO_0000254170" description="DCN1-like protein 5">
    <location>
        <begin position="1"/>
        <end position="236"/>
    </location>
</feature>
<feature type="domain" description="DCUN1" evidence="3">
    <location>
        <begin position="45"/>
        <end position="231"/>
    </location>
</feature>
<feature type="modified residue" description="Phosphoserine" evidence="1">
    <location>
        <position position="9"/>
    </location>
</feature>
<feature type="modified residue" description="Phosphoserine" evidence="1">
    <location>
        <position position="40"/>
    </location>
</feature>
<feature type="modified residue" description="Phosphoserine" evidence="1">
    <location>
        <position position="47"/>
    </location>
</feature>
<proteinExistence type="evidence at transcript level"/>